<gene>
    <name evidence="1" type="primary">rpsB</name>
    <name type="ordered locus">Bsph_1583</name>
</gene>
<accession>B1HQZ0</accession>
<comment type="similarity">
    <text evidence="1">Belongs to the universal ribosomal protein uS2 family.</text>
</comment>
<comment type="sequence caution" evidence="2">
    <conflict type="erroneous initiation">
        <sequence resource="EMBL-CDS" id="ACA39181"/>
    </conflict>
</comment>
<evidence type="ECO:0000255" key="1">
    <source>
        <dbReference type="HAMAP-Rule" id="MF_00291"/>
    </source>
</evidence>
<evidence type="ECO:0000305" key="2"/>
<organism>
    <name type="scientific">Lysinibacillus sphaericus (strain C3-41)</name>
    <dbReference type="NCBI Taxonomy" id="444177"/>
    <lineage>
        <taxon>Bacteria</taxon>
        <taxon>Bacillati</taxon>
        <taxon>Bacillota</taxon>
        <taxon>Bacilli</taxon>
        <taxon>Bacillales</taxon>
        <taxon>Bacillaceae</taxon>
        <taxon>Lysinibacillus</taxon>
    </lineage>
</organism>
<proteinExistence type="inferred from homology"/>
<reference key="1">
    <citation type="journal article" date="2008" name="J. Bacteriol.">
        <title>Complete genome sequence of the mosquitocidal bacterium Bacillus sphaericus C3-41 and comparison with those of closely related Bacillus species.</title>
        <authorList>
            <person name="Hu X."/>
            <person name="Fan W."/>
            <person name="Han B."/>
            <person name="Liu H."/>
            <person name="Zheng D."/>
            <person name="Li Q."/>
            <person name="Dong W."/>
            <person name="Yan J."/>
            <person name="Gao M."/>
            <person name="Berry C."/>
            <person name="Yuan Z."/>
        </authorList>
    </citation>
    <scope>NUCLEOTIDE SEQUENCE [LARGE SCALE GENOMIC DNA]</scope>
    <source>
        <strain>C3-41</strain>
    </source>
</reference>
<keyword id="KW-0687">Ribonucleoprotein</keyword>
<keyword id="KW-0689">Ribosomal protein</keyword>
<feature type="chain" id="PRO_0000352004" description="Small ribosomal subunit protein uS2">
    <location>
        <begin position="1"/>
        <end position="239"/>
    </location>
</feature>
<dbReference type="EMBL" id="CP000817">
    <property type="protein sequence ID" value="ACA39181.1"/>
    <property type="status" value="ALT_INIT"/>
    <property type="molecule type" value="Genomic_DNA"/>
</dbReference>
<dbReference type="RefSeq" id="WP_004269262.1">
    <property type="nucleotide sequence ID" value="NC_010382.1"/>
</dbReference>
<dbReference type="SMR" id="B1HQZ0"/>
<dbReference type="EnsemblBacteria" id="ACA39181">
    <property type="protein sequence ID" value="ACA39181"/>
    <property type="gene ID" value="Bsph_1583"/>
</dbReference>
<dbReference type="GeneID" id="74904161"/>
<dbReference type="KEGG" id="lsp:Bsph_1583"/>
<dbReference type="HOGENOM" id="CLU_040318_1_2_9"/>
<dbReference type="Proteomes" id="UP000002164">
    <property type="component" value="Chromosome"/>
</dbReference>
<dbReference type="GO" id="GO:0022627">
    <property type="term" value="C:cytosolic small ribosomal subunit"/>
    <property type="evidence" value="ECO:0007669"/>
    <property type="project" value="TreeGrafter"/>
</dbReference>
<dbReference type="GO" id="GO:0003735">
    <property type="term" value="F:structural constituent of ribosome"/>
    <property type="evidence" value="ECO:0007669"/>
    <property type="project" value="InterPro"/>
</dbReference>
<dbReference type="GO" id="GO:0006412">
    <property type="term" value="P:translation"/>
    <property type="evidence" value="ECO:0007669"/>
    <property type="project" value="UniProtKB-UniRule"/>
</dbReference>
<dbReference type="CDD" id="cd01425">
    <property type="entry name" value="RPS2"/>
    <property type="match status" value="1"/>
</dbReference>
<dbReference type="FunFam" id="1.10.287.610:FF:000001">
    <property type="entry name" value="30S ribosomal protein S2"/>
    <property type="match status" value="1"/>
</dbReference>
<dbReference type="Gene3D" id="3.40.50.10490">
    <property type="entry name" value="Glucose-6-phosphate isomerase like protein, domain 1"/>
    <property type="match status" value="1"/>
</dbReference>
<dbReference type="Gene3D" id="1.10.287.610">
    <property type="entry name" value="Helix hairpin bin"/>
    <property type="match status" value="1"/>
</dbReference>
<dbReference type="HAMAP" id="MF_00291_B">
    <property type="entry name" value="Ribosomal_uS2_B"/>
    <property type="match status" value="1"/>
</dbReference>
<dbReference type="InterPro" id="IPR001865">
    <property type="entry name" value="Ribosomal_uS2"/>
</dbReference>
<dbReference type="InterPro" id="IPR005706">
    <property type="entry name" value="Ribosomal_uS2_bac/mit/plastid"/>
</dbReference>
<dbReference type="InterPro" id="IPR018130">
    <property type="entry name" value="Ribosomal_uS2_CS"/>
</dbReference>
<dbReference type="InterPro" id="IPR023591">
    <property type="entry name" value="Ribosomal_uS2_flav_dom_sf"/>
</dbReference>
<dbReference type="NCBIfam" id="TIGR01011">
    <property type="entry name" value="rpsB_bact"/>
    <property type="match status" value="1"/>
</dbReference>
<dbReference type="PANTHER" id="PTHR12534">
    <property type="entry name" value="30S RIBOSOMAL PROTEIN S2 PROKARYOTIC AND ORGANELLAR"/>
    <property type="match status" value="1"/>
</dbReference>
<dbReference type="PANTHER" id="PTHR12534:SF0">
    <property type="entry name" value="SMALL RIBOSOMAL SUBUNIT PROTEIN US2M"/>
    <property type="match status" value="1"/>
</dbReference>
<dbReference type="Pfam" id="PF00318">
    <property type="entry name" value="Ribosomal_S2"/>
    <property type="match status" value="1"/>
</dbReference>
<dbReference type="PRINTS" id="PR00395">
    <property type="entry name" value="RIBOSOMALS2"/>
</dbReference>
<dbReference type="SUPFAM" id="SSF52313">
    <property type="entry name" value="Ribosomal protein S2"/>
    <property type="match status" value="1"/>
</dbReference>
<dbReference type="PROSITE" id="PS00962">
    <property type="entry name" value="RIBOSOMAL_S2_1"/>
    <property type="match status" value="1"/>
</dbReference>
<dbReference type="PROSITE" id="PS00963">
    <property type="entry name" value="RIBOSOMAL_S2_2"/>
    <property type="match status" value="1"/>
</dbReference>
<protein>
    <recommendedName>
        <fullName evidence="1">Small ribosomal subunit protein uS2</fullName>
    </recommendedName>
    <alternativeName>
        <fullName evidence="2">30S ribosomal protein S2</fullName>
    </alternativeName>
</protein>
<name>RS2_LYSSC</name>
<sequence>MSVISMKQLLEAGVHFGHQTRRWNPKMKKYIFVERNGIYIIDLQKTVKKLEEAYDFMRQVGQDGGKVLFVGTKKQAQEAIKDEAERSGNYYINQRWLGGTLTNFGTIQKRVARMKQIEKMEEEGTFEVLPKKEVIQLKKEHERLIKFLGGIRDMHDLPDVMFVVDPRKERIAVAEARKLNIPLVGIVDTNCDPDEIDYVIPANDDAIRAVKLLTAKMADALIESKQGEEEAPAVEAAAE</sequence>